<name>RHAD_SALPB</name>
<accession>A9MZC4</accession>
<dbReference type="EC" id="4.1.2.19" evidence="1"/>
<dbReference type="EMBL" id="CP000886">
    <property type="protein sequence ID" value="ABX70302.1"/>
    <property type="molecule type" value="Genomic_DNA"/>
</dbReference>
<dbReference type="RefSeq" id="WP_001179698.1">
    <property type="nucleotide sequence ID" value="NC_010102.1"/>
</dbReference>
<dbReference type="SMR" id="A9MZC4"/>
<dbReference type="KEGG" id="spq:SPAB_05011"/>
<dbReference type="PATRIC" id="fig|1016998.12.peg.4703"/>
<dbReference type="HOGENOM" id="CLU_076831_0_0_6"/>
<dbReference type="BioCyc" id="SENT1016998:SPAB_RS20390-MONOMER"/>
<dbReference type="UniPathway" id="UPA00541">
    <property type="reaction ID" value="UER00603"/>
</dbReference>
<dbReference type="Proteomes" id="UP000008556">
    <property type="component" value="Chromosome"/>
</dbReference>
<dbReference type="GO" id="GO:0005829">
    <property type="term" value="C:cytosol"/>
    <property type="evidence" value="ECO:0007669"/>
    <property type="project" value="TreeGrafter"/>
</dbReference>
<dbReference type="GO" id="GO:0046872">
    <property type="term" value="F:metal ion binding"/>
    <property type="evidence" value="ECO:0007669"/>
    <property type="project" value="UniProtKB-KW"/>
</dbReference>
<dbReference type="GO" id="GO:0008994">
    <property type="term" value="F:rhamnulose-1-phosphate aldolase activity"/>
    <property type="evidence" value="ECO:0007669"/>
    <property type="project" value="UniProtKB-UniRule"/>
</dbReference>
<dbReference type="GO" id="GO:0019323">
    <property type="term" value="P:pentose catabolic process"/>
    <property type="evidence" value="ECO:0007669"/>
    <property type="project" value="TreeGrafter"/>
</dbReference>
<dbReference type="GO" id="GO:0019301">
    <property type="term" value="P:rhamnose catabolic process"/>
    <property type="evidence" value="ECO:0007669"/>
    <property type="project" value="UniProtKB-UniRule"/>
</dbReference>
<dbReference type="CDD" id="cd00398">
    <property type="entry name" value="Aldolase_II"/>
    <property type="match status" value="1"/>
</dbReference>
<dbReference type="FunFam" id="3.40.225.10:FF:000006">
    <property type="entry name" value="Rhamnulose-1-phosphate aldolase"/>
    <property type="match status" value="1"/>
</dbReference>
<dbReference type="Gene3D" id="3.40.225.10">
    <property type="entry name" value="Class II aldolase/adducin N-terminal domain"/>
    <property type="match status" value="1"/>
</dbReference>
<dbReference type="HAMAP" id="MF_00770">
    <property type="entry name" value="RhaD"/>
    <property type="match status" value="1"/>
</dbReference>
<dbReference type="InterPro" id="IPR050197">
    <property type="entry name" value="Aldolase_class_II_sugar_metab"/>
</dbReference>
<dbReference type="InterPro" id="IPR001303">
    <property type="entry name" value="Aldolase_II/adducin_N"/>
</dbReference>
<dbReference type="InterPro" id="IPR036409">
    <property type="entry name" value="Aldolase_II/adducin_N_sf"/>
</dbReference>
<dbReference type="InterPro" id="IPR013447">
    <property type="entry name" value="Rhamnulose-1-P_Aldolase"/>
</dbReference>
<dbReference type="NCBIfam" id="NF002963">
    <property type="entry name" value="PRK03634.1"/>
    <property type="match status" value="1"/>
</dbReference>
<dbReference type="NCBIfam" id="TIGR02624">
    <property type="entry name" value="rhamnu_1P_ald"/>
    <property type="match status" value="1"/>
</dbReference>
<dbReference type="PANTHER" id="PTHR22789">
    <property type="entry name" value="FUCULOSE PHOSPHATE ALDOLASE"/>
    <property type="match status" value="1"/>
</dbReference>
<dbReference type="PANTHER" id="PTHR22789:SF16">
    <property type="entry name" value="RHAMNULOSE-1-PHOSPHATE ALDOLASE"/>
    <property type="match status" value="1"/>
</dbReference>
<dbReference type="Pfam" id="PF00596">
    <property type="entry name" value="Aldolase_II"/>
    <property type="match status" value="1"/>
</dbReference>
<dbReference type="SMART" id="SM01007">
    <property type="entry name" value="Aldolase_II"/>
    <property type="match status" value="1"/>
</dbReference>
<dbReference type="SUPFAM" id="SSF53639">
    <property type="entry name" value="AraD/HMP-PK domain-like"/>
    <property type="match status" value="1"/>
</dbReference>
<evidence type="ECO:0000255" key="1">
    <source>
        <dbReference type="HAMAP-Rule" id="MF_00770"/>
    </source>
</evidence>
<reference key="1">
    <citation type="submission" date="2007-11" db="EMBL/GenBank/DDBJ databases">
        <authorList>
            <consortium name="The Salmonella enterica serovar Paratyphi B Genome Sequencing Project"/>
            <person name="McClelland M."/>
            <person name="Sanderson E.K."/>
            <person name="Porwollik S."/>
            <person name="Spieth J."/>
            <person name="Clifton W.S."/>
            <person name="Fulton R."/>
            <person name="Cordes M."/>
            <person name="Wollam A."/>
            <person name="Shah N."/>
            <person name="Pepin K."/>
            <person name="Bhonagiri V."/>
            <person name="Nash W."/>
            <person name="Johnson M."/>
            <person name="Thiruvilangam P."/>
            <person name="Wilson R."/>
        </authorList>
    </citation>
    <scope>NUCLEOTIDE SEQUENCE [LARGE SCALE GENOMIC DNA]</scope>
    <source>
        <strain>ATCC BAA-1250 / SPB7</strain>
    </source>
</reference>
<keyword id="KW-0963">Cytoplasm</keyword>
<keyword id="KW-0456">Lyase</keyword>
<keyword id="KW-0479">Metal-binding</keyword>
<keyword id="KW-0684">Rhamnose metabolism</keyword>
<keyword id="KW-0862">Zinc</keyword>
<gene>
    <name evidence="1" type="primary">rhaD</name>
    <name type="ordered locus">SPAB_05011</name>
</gene>
<protein>
    <recommendedName>
        <fullName evidence="1">Rhamnulose-1-phosphate aldolase</fullName>
        <ecNumber evidence="1">4.1.2.19</ecNumber>
    </recommendedName>
</protein>
<comment type="function">
    <text evidence="1">Catalyzes the reversible cleavage of L-rhamnulose-1-phosphate to dihydroxyacetone phosphate (DHAP) and L-lactaldehyde.</text>
</comment>
<comment type="catalytic activity">
    <reaction evidence="1">
        <text>L-rhamnulose 1-phosphate = (S)-lactaldehyde + dihydroxyacetone phosphate</text>
        <dbReference type="Rhea" id="RHEA:19689"/>
        <dbReference type="ChEBI" id="CHEBI:18041"/>
        <dbReference type="ChEBI" id="CHEBI:57642"/>
        <dbReference type="ChEBI" id="CHEBI:58313"/>
        <dbReference type="EC" id="4.1.2.19"/>
    </reaction>
</comment>
<comment type="cofactor">
    <cofactor evidence="1">
        <name>Zn(2+)</name>
        <dbReference type="ChEBI" id="CHEBI:29105"/>
    </cofactor>
    <text evidence="1">Binds 1 zinc ion per subunit.</text>
</comment>
<comment type="pathway">
    <text evidence="1">Carbohydrate degradation; L-rhamnose degradation; glycerone phosphate from L-rhamnose: step 3/3.</text>
</comment>
<comment type="subunit">
    <text evidence="1">Homotetramer.</text>
</comment>
<comment type="subcellular location">
    <subcellularLocation>
        <location evidence="1">Cytoplasm</location>
    </subcellularLocation>
</comment>
<comment type="similarity">
    <text evidence="1">Belongs to the aldolase class II family. RhaD subfamily.</text>
</comment>
<organism>
    <name type="scientific">Salmonella paratyphi B (strain ATCC BAA-1250 / SPB7)</name>
    <dbReference type="NCBI Taxonomy" id="1016998"/>
    <lineage>
        <taxon>Bacteria</taxon>
        <taxon>Pseudomonadati</taxon>
        <taxon>Pseudomonadota</taxon>
        <taxon>Gammaproteobacteria</taxon>
        <taxon>Enterobacterales</taxon>
        <taxon>Enterobacteriaceae</taxon>
        <taxon>Salmonella</taxon>
    </lineage>
</organism>
<proteinExistence type="inferred from homology"/>
<sequence>MQNITDSWFVQGMIKATSDAWLKGWDERNGGNLTLRLDETDIAPFAANFHEKPRYIALSQPMPLLANTPFIVTGSGKFFRNVQLDPAANLGVVKIDSDGAGYHILWGLTHDAVPTSELPAHFLSHCERIKATHGKDRVIMHCHATNLIALTYVLENNTALITRKLWEGSTECLVVFPGGVGILPWMVPGTDEIGQATAQEMQKHSLVLWPFHGVFGSGPTLDETFGLIDTAEKSAEVLVKIYSMGGMKQTITREELVALGKRFGVTPLASAVALY</sequence>
<feature type="chain" id="PRO_1000083574" description="Rhamnulose-1-phosphate aldolase">
    <location>
        <begin position="1"/>
        <end position="275"/>
    </location>
</feature>
<feature type="active site" evidence="1">
    <location>
        <position position="117"/>
    </location>
</feature>
<feature type="binding site" evidence="1">
    <location>
        <position position="141"/>
    </location>
    <ligand>
        <name>Zn(2+)</name>
        <dbReference type="ChEBI" id="CHEBI:29105"/>
    </ligand>
</feature>
<feature type="binding site" evidence="1">
    <location>
        <position position="143"/>
    </location>
    <ligand>
        <name>Zn(2+)</name>
        <dbReference type="ChEBI" id="CHEBI:29105"/>
    </ligand>
</feature>
<feature type="binding site" evidence="1">
    <location>
        <position position="212"/>
    </location>
    <ligand>
        <name>Zn(2+)</name>
        <dbReference type="ChEBI" id="CHEBI:29105"/>
    </ligand>
</feature>